<feature type="chain" id="PRO_0000075223" description="Alanine--tRNA ligase">
    <location>
        <begin position="1"/>
        <end position="890"/>
    </location>
</feature>
<feature type="binding site" evidence="1">
    <location>
        <position position="573"/>
    </location>
    <ligand>
        <name>Zn(2+)</name>
        <dbReference type="ChEBI" id="CHEBI:29105"/>
    </ligand>
</feature>
<feature type="binding site" evidence="1">
    <location>
        <position position="577"/>
    </location>
    <ligand>
        <name>Zn(2+)</name>
        <dbReference type="ChEBI" id="CHEBI:29105"/>
    </ligand>
</feature>
<feature type="binding site" evidence="1">
    <location>
        <position position="675"/>
    </location>
    <ligand>
        <name>Zn(2+)</name>
        <dbReference type="ChEBI" id="CHEBI:29105"/>
    </ligand>
</feature>
<feature type="binding site" evidence="1">
    <location>
        <position position="679"/>
    </location>
    <ligand>
        <name>Zn(2+)</name>
        <dbReference type="ChEBI" id="CHEBI:29105"/>
    </ligand>
</feature>
<organism>
    <name type="scientific">Streptomyces avermitilis (strain ATCC 31267 / DSM 46492 / JCM 5070 / NBRC 14893 / NCIMB 12804 / NRRL 8165 / MA-4680)</name>
    <dbReference type="NCBI Taxonomy" id="227882"/>
    <lineage>
        <taxon>Bacteria</taxon>
        <taxon>Bacillati</taxon>
        <taxon>Actinomycetota</taxon>
        <taxon>Actinomycetes</taxon>
        <taxon>Kitasatosporales</taxon>
        <taxon>Streptomycetaceae</taxon>
        <taxon>Streptomyces</taxon>
    </lineage>
</organism>
<protein>
    <recommendedName>
        <fullName evidence="1">Alanine--tRNA ligase</fullName>
        <ecNumber evidence="1">6.1.1.7</ecNumber>
    </recommendedName>
    <alternativeName>
        <fullName evidence="1">Alanyl-tRNA synthetase</fullName>
        <shortName evidence="1">AlaRS</shortName>
    </alternativeName>
</protein>
<dbReference type="EC" id="6.1.1.7" evidence="1"/>
<dbReference type="EMBL" id="BA000030">
    <property type="protein sequence ID" value="BAC74561.1"/>
    <property type="molecule type" value="Genomic_DNA"/>
</dbReference>
<dbReference type="RefSeq" id="WP_010988248.1">
    <property type="nucleotide sequence ID" value="NZ_JZJK01000082.1"/>
</dbReference>
<dbReference type="SMR" id="Q827S4"/>
<dbReference type="GeneID" id="41543925"/>
<dbReference type="KEGG" id="sma:SAVERM_6850"/>
<dbReference type="eggNOG" id="COG0013">
    <property type="taxonomic scope" value="Bacteria"/>
</dbReference>
<dbReference type="HOGENOM" id="CLU_004485_1_1_11"/>
<dbReference type="OrthoDB" id="9803884at2"/>
<dbReference type="Proteomes" id="UP000000428">
    <property type="component" value="Chromosome"/>
</dbReference>
<dbReference type="GO" id="GO:0005829">
    <property type="term" value="C:cytosol"/>
    <property type="evidence" value="ECO:0007669"/>
    <property type="project" value="TreeGrafter"/>
</dbReference>
<dbReference type="GO" id="GO:0004813">
    <property type="term" value="F:alanine-tRNA ligase activity"/>
    <property type="evidence" value="ECO:0007669"/>
    <property type="project" value="UniProtKB-UniRule"/>
</dbReference>
<dbReference type="GO" id="GO:0002161">
    <property type="term" value="F:aminoacyl-tRNA deacylase activity"/>
    <property type="evidence" value="ECO:0007669"/>
    <property type="project" value="TreeGrafter"/>
</dbReference>
<dbReference type="GO" id="GO:0005524">
    <property type="term" value="F:ATP binding"/>
    <property type="evidence" value="ECO:0007669"/>
    <property type="project" value="UniProtKB-UniRule"/>
</dbReference>
<dbReference type="GO" id="GO:0000049">
    <property type="term" value="F:tRNA binding"/>
    <property type="evidence" value="ECO:0007669"/>
    <property type="project" value="UniProtKB-KW"/>
</dbReference>
<dbReference type="GO" id="GO:0008270">
    <property type="term" value="F:zinc ion binding"/>
    <property type="evidence" value="ECO:0007669"/>
    <property type="project" value="UniProtKB-UniRule"/>
</dbReference>
<dbReference type="GO" id="GO:0006419">
    <property type="term" value="P:alanyl-tRNA aminoacylation"/>
    <property type="evidence" value="ECO:0007669"/>
    <property type="project" value="UniProtKB-UniRule"/>
</dbReference>
<dbReference type="CDD" id="cd00673">
    <property type="entry name" value="AlaRS_core"/>
    <property type="match status" value="1"/>
</dbReference>
<dbReference type="FunFam" id="2.40.30.130:FF:000001">
    <property type="entry name" value="Alanine--tRNA ligase"/>
    <property type="match status" value="1"/>
</dbReference>
<dbReference type="FunFam" id="3.10.310.40:FF:000001">
    <property type="entry name" value="Alanine--tRNA ligase"/>
    <property type="match status" value="1"/>
</dbReference>
<dbReference type="FunFam" id="3.30.54.20:FF:000001">
    <property type="entry name" value="Alanine--tRNA ligase"/>
    <property type="match status" value="1"/>
</dbReference>
<dbReference type="FunFam" id="3.30.930.10:FF:000004">
    <property type="entry name" value="Alanine--tRNA ligase"/>
    <property type="match status" value="1"/>
</dbReference>
<dbReference type="FunFam" id="3.30.980.10:FF:000004">
    <property type="entry name" value="Alanine--tRNA ligase, cytoplasmic"/>
    <property type="match status" value="1"/>
</dbReference>
<dbReference type="Gene3D" id="2.40.30.130">
    <property type="match status" value="1"/>
</dbReference>
<dbReference type="Gene3D" id="3.10.310.40">
    <property type="match status" value="1"/>
</dbReference>
<dbReference type="Gene3D" id="3.30.54.20">
    <property type="match status" value="1"/>
</dbReference>
<dbReference type="Gene3D" id="6.10.250.550">
    <property type="match status" value="1"/>
</dbReference>
<dbReference type="Gene3D" id="3.30.930.10">
    <property type="entry name" value="Bira Bifunctional Protein, Domain 2"/>
    <property type="match status" value="1"/>
</dbReference>
<dbReference type="Gene3D" id="3.30.980.10">
    <property type="entry name" value="Threonyl-trna Synthetase, Chain A, domain 2"/>
    <property type="match status" value="1"/>
</dbReference>
<dbReference type="HAMAP" id="MF_00036_B">
    <property type="entry name" value="Ala_tRNA_synth_B"/>
    <property type="match status" value="1"/>
</dbReference>
<dbReference type="InterPro" id="IPR045864">
    <property type="entry name" value="aa-tRNA-synth_II/BPL/LPL"/>
</dbReference>
<dbReference type="InterPro" id="IPR002318">
    <property type="entry name" value="Ala-tRNA-lgiase_IIc"/>
</dbReference>
<dbReference type="InterPro" id="IPR018162">
    <property type="entry name" value="Ala-tRNA-ligase_IIc_anticod-bd"/>
</dbReference>
<dbReference type="InterPro" id="IPR018165">
    <property type="entry name" value="Ala-tRNA-synth_IIc_core"/>
</dbReference>
<dbReference type="InterPro" id="IPR018164">
    <property type="entry name" value="Ala-tRNA-synth_IIc_N"/>
</dbReference>
<dbReference type="InterPro" id="IPR050058">
    <property type="entry name" value="Ala-tRNA_ligase"/>
</dbReference>
<dbReference type="InterPro" id="IPR023033">
    <property type="entry name" value="Ala_tRNA_ligase_euk/bac"/>
</dbReference>
<dbReference type="InterPro" id="IPR003156">
    <property type="entry name" value="DHHA1_dom"/>
</dbReference>
<dbReference type="InterPro" id="IPR018163">
    <property type="entry name" value="Thr/Ala-tRNA-synth_IIc_edit"/>
</dbReference>
<dbReference type="InterPro" id="IPR009000">
    <property type="entry name" value="Transl_B-barrel_sf"/>
</dbReference>
<dbReference type="InterPro" id="IPR012947">
    <property type="entry name" value="tRNA_SAD"/>
</dbReference>
<dbReference type="NCBIfam" id="TIGR00344">
    <property type="entry name" value="alaS"/>
    <property type="match status" value="1"/>
</dbReference>
<dbReference type="PANTHER" id="PTHR11777:SF9">
    <property type="entry name" value="ALANINE--TRNA LIGASE, CYTOPLASMIC"/>
    <property type="match status" value="1"/>
</dbReference>
<dbReference type="PANTHER" id="PTHR11777">
    <property type="entry name" value="ALANYL-TRNA SYNTHETASE"/>
    <property type="match status" value="1"/>
</dbReference>
<dbReference type="Pfam" id="PF02272">
    <property type="entry name" value="DHHA1"/>
    <property type="match status" value="1"/>
</dbReference>
<dbReference type="Pfam" id="PF01411">
    <property type="entry name" value="tRNA-synt_2c"/>
    <property type="match status" value="1"/>
</dbReference>
<dbReference type="Pfam" id="PF07973">
    <property type="entry name" value="tRNA_SAD"/>
    <property type="match status" value="1"/>
</dbReference>
<dbReference type="PRINTS" id="PR00980">
    <property type="entry name" value="TRNASYNTHALA"/>
</dbReference>
<dbReference type="SMART" id="SM00863">
    <property type="entry name" value="tRNA_SAD"/>
    <property type="match status" value="1"/>
</dbReference>
<dbReference type="SUPFAM" id="SSF55681">
    <property type="entry name" value="Class II aaRS and biotin synthetases"/>
    <property type="match status" value="1"/>
</dbReference>
<dbReference type="SUPFAM" id="SSF101353">
    <property type="entry name" value="Putative anticodon-binding domain of alanyl-tRNA synthetase (AlaRS)"/>
    <property type="match status" value="1"/>
</dbReference>
<dbReference type="SUPFAM" id="SSF55186">
    <property type="entry name" value="ThrRS/AlaRS common domain"/>
    <property type="match status" value="1"/>
</dbReference>
<dbReference type="SUPFAM" id="SSF50447">
    <property type="entry name" value="Translation proteins"/>
    <property type="match status" value="1"/>
</dbReference>
<dbReference type="PROSITE" id="PS50860">
    <property type="entry name" value="AA_TRNA_LIGASE_II_ALA"/>
    <property type="match status" value="1"/>
</dbReference>
<reference key="1">
    <citation type="journal article" date="2001" name="Proc. Natl. Acad. Sci. U.S.A.">
        <title>Genome sequence of an industrial microorganism Streptomyces avermitilis: deducing the ability of producing secondary metabolites.</title>
        <authorList>
            <person name="Omura S."/>
            <person name="Ikeda H."/>
            <person name="Ishikawa J."/>
            <person name="Hanamoto A."/>
            <person name="Takahashi C."/>
            <person name="Shinose M."/>
            <person name="Takahashi Y."/>
            <person name="Horikawa H."/>
            <person name="Nakazawa H."/>
            <person name="Osonoe T."/>
            <person name="Kikuchi H."/>
            <person name="Shiba T."/>
            <person name="Sakaki Y."/>
            <person name="Hattori M."/>
        </authorList>
    </citation>
    <scope>NUCLEOTIDE SEQUENCE [LARGE SCALE GENOMIC DNA]</scope>
    <source>
        <strain>ATCC 31267 / DSM 46492 / JCM 5070 / NBRC 14893 / NCIMB 12804 / NRRL 8165 / MA-4680</strain>
    </source>
</reference>
<reference key="2">
    <citation type="journal article" date="2003" name="Nat. Biotechnol.">
        <title>Complete genome sequence and comparative analysis of the industrial microorganism Streptomyces avermitilis.</title>
        <authorList>
            <person name="Ikeda H."/>
            <person name="Ishikawa J."/>
            <person name="Hanamoto A."/>
            <person name="Shinose M."/>
            <person name="Kikuchi H."/>
            <person name="Shiba T."/>
            <person name="Sakaki Y."/>
            <person name="Hattori M."/>
            <person name="Omura S."/>
        </authorList>
    </citation>
    <scope>NUCLEOTIDE SEQUENCE [LARGE SCALE GENOMIC DNA]</scope>
    <source>
        <strain>ATCC 31267 / DSM 46492 / JCM 5070 / NBRC 14893 / NCIMB 12804 / NRRL 8165 / MA-4680</strain>
    </source>
</reference>
<comment type="function">
    <text evidence="1">Catalyzes the attachment of alanine to tRNA(Ala) in a two-step reaction: alanine is first activated by ATP to form Ala-AMP and then transferred to the acceptor end of tRNA(Ala). Also edits incorrectly charged Ser-tRNA(Ala) and Gly-tRNA(Ala) via its editing domain.</text>
</comment>
<comment type="catalytic activity">
    <reaction evidence="1">
        <text>tRNA(Ala) + L-alanine + ATP = L-alanyl-tRNA(Ala) + AMP + diphosphate</text>
        <dbReference type="Rhea" id="RHEA:12540"/>
        <dbReference type="Rhea" id="RHEA-COMP:9657"/>
        <dbReference type="Rhea" id="RHEA-COMP:9923"/>
        <dbReference type="ChEBI" id="CHEBI:30616"/>
        <dbReference type="ChEBI" id="CHEBI:33019"/>
        <dbReference type="ChEBI" id="CHEBI:57972"/>
        <dbReference type="ChEBI" id="CHEBI:78442"/>
        <dbReference type="ChEBI" id="CHEBI:78497"/>
        <dbReference type="ChEBI" id="CHEBI:456215"/>
        <dbReference type="EC" id="6.1.1.7"/>
    </reaction>
</comment>
<comment type="cofactor">
    <cofactor evidence="1">
        <name>Zn(2+)</name>
        <dbReference type="ChEBI" id="CHEBI:29105"/>
    </cofactor>
    <text evidence="1">Binds 1 zinc ion per subunit.</text>
</comment>
<comment type="subcellular location">
    <subcellularLocation>
        <location evidence="1">Cytoplasm</location>
    </subcellularLocation>
</comment>
<comment type="domain">
    <text evidence="1">Consists of three domains; the N-terminal catalytic domain, the editing domain and the C-terminal C-Ala domain. The editing domain removes incorrectly charged amino acids, while the C-Ala domain, along with tRNA(Ala), serves as a bridge to cooperatively bring together the editing and aminoacylation centers thus stimulating deacylation of misacylated tRNAs.</text>
</comment>
<comment type="similarity">
    <text evidence="1">Belongs to the class-II aminoacyl-tRNA synthetase family.</text>
</comment>
<proteinExistence type="inferred from homology"/>
<name>SYA_STRAW</name>
<accession>Q827S4</accession>
<evidence type="ECO:0000255" key="1">
    <source>
        <dbReference type="HAMAP-Rule" id="MF_00036"/>
    </source>
</evidence>
<sequence>MESAEIRRRWLSFYEERGHTVVPSASLIADDPTLLLVPAGMVPFKPYFLGEVKPPWPRATSVQKCVRTPDIEEVGKTTRHGTFFQMCGNFSFGDYFKEGAITYAWELLTTPQDKGGYGLDPERLWITVYLDDDEAETIWRDKIGVPAERIQRLGKKDNYWSMGVPGPCGPCSEINYDRGPEFGVEGGPAVNDERYVEIWNLVFMQYERGEGTSKDDFEILGDLPQKNIDTGLGMERLAMILQGVQNMYEIDTSMAVIQKATELTGVEYGAAHGSDVSLRVVTDHMRTSVMLIGDGVTPGNEGRGYVLRRIMRRAIRNMRLLGATGPVVKDLVDVVIAMMGQQYPELISDRQRIETVALAEEAAFLKTLKAGTNILDTAVTETKASGGQVLPGDKAFLLHDTWGFPIDLTLEMAAEQGLSVDEDGFRRLMKEQRERAKADAQSKKTGHADLGAYREIADAAGETDFIGYTQTEGESTIVGILVDGVSSPAATEGDEVEIVLDRTPFYAEGGGQIGDTGRIKVESGAIIEVRDCQKPVPGVYVHKGVVQVGEVTVGAKAQVSIDVRRRKAIARAHSATHLTHQALRDALGPTAAQAGSENQPGRFRFDFGSPSAVPTTVMTDVEQQINEVLARDLDVQAEVMSIDEAKKQGAIAEFGEKYGERVRVVTIGDFSKELCGGTHVHNTAQLGLVKLLGESSIGSGVRRIEALVGVDAYNFLAREHTVVAQIQELVKGRPEELPEKVSAMLGKLKDAEKEIERFRAEKVLQAAAGLVDSAKDVRGIALVTGQVPDGTTADDLRRLVLDVRGRIQGGRPAVVALFTTVGGKPLTVIATNEAARERGLKAGDLVRAAAKTLGGGGGGKPDVAQGGGQNPAAIGEAIDAVERLVTETAK</sequence>
<gene>
    <name evidence="1" type="primary">alaS</name>
    <name type="ordered locus">SAV_6850</name>
</gene>
<keyword id="KW-0030">Aminoacyl-tRNA synthetase</keyword>
<keyword id="KW-0067">ATP-binding</keyword>
<keyword id="KW-0963">Cytoplasm</keyword>
<keyword id="KW-0436">Ligase</keyword>
<keyword id="KW-0479">Metal-binding</keyword>
<keyword id="KW-0547">Nucleotide-binding</keyword>
<keyword id="KW-0648">Protein biosynthesis</keyword>
<keyword id="KW-1185">Reference proteome</keyword>
<keyword id="KW-0694">RNA-binding</keyword>
<keyword id="KW-0820">tRNA-binding</keyword>
<keyword id="KW-0862">Zinc</keyword>